<evidence type="ECO:0000250" key="1">
    <source>
        <dbReference type="UniProtKB" id="P26325"/>
    </source>
</evidence>
<evidence type="ECO:0000250" key="2">
    <source>
        <dbReference type="UniProtKB" id="P80338"/>
    </source>
</evidence>
<evidence type="ECO:0000255" key="3"/>
<evidence type="ECO:0000305" key="4"/>
<accession>P86883</accession>
<sequence>ATSGKVIRCRAAVAWAVGKPLSVEEVEVAPPKAGEVRIKIVATGICRTDDHVVKGCIANVEFPVIPGHEGAGIVESIGEGVTSVKPGDKVIPLCIPNCGECTFCLNPEASYCVKSHFSEPQNLMPDKTSRFTCKGKQIHHFMWVSTFAEYTVAPETAVAKIDSAAPLDKVCLLGCGFSTGYGAAINTAKVKPGSTCAVFGLGGVGLSVVMGCKVAGASRIIAIDINKDKFAKAKELGATDCINPQDFNKPIQEVVTEMTGHEVDYSFEVIGRADTMIAALASCNMNTGVFVMVGVAPSDAVISVDPLLLLTGRTHKGTLVGGSKGRNFIPRLVSSYLEKKFNSDLLITHTLPFAKVNEGFALLHAGKSIRTVLLF</sequence>
<feature type="chain" id="PRO_0000405311" description="Alcohol dehydrogenase 1">
    <location>
        <begin position="1"/>
        <end position="375"/>
    </location>
</feature>
<feature type="binding site" evidence="1">
    <location>
        <position position="46"/>
    </location>
    <ligand>
        <name>Zn(2+)</name>
        <dbReference type="ChEBI" id="CHEBI:29105"/>
        <label>1</label>
        <note>catalytic</note>
    </ligand>
</feature>
<feature type="binding site" evidence="1">
    <location>
        <position position="68"/>
    </location>
    <ligand>
        <name>Zn(2+)</name>
        <dbReference type="ChEBI" id="CHEBI:29105"/>
        <label>1</label>
        <note>catalytic</note>
    </ligand>
</feature>
<feature type="binding site" evidence="1">
    <location>
        <position position="98"/>
    </location>
    <ligand>
        <name>Zn(2+)</name>
        <dbReference type="ChEBI" id="CHEBI:29105"/>
        <label>2</label>
    </ligand>
</feature>
<feature type="binding site" evidence="1">
    <location>
        <position position="101"/>
    </location>
    <ligand>
        <name>Zn(2+)</name>
        <dbReference type="ChEBI" id="CHEBI:29105"/>
        <label>2</label>
    </ligand>
</feature>
<feature type="binding site" evidence="1">
    <location>
        <position position="104"/>
    </location>
    <ligand>
        <name>Zn(2+)</name>
        <dbReference type="ChEBI" id="CHEBI:29105"/>
        <label>2</label>
    </ligand>
</feature>
<feature type="binding site" evidence="1">
    <location>
        <position position="112"/>
    </location>
    <ligand>
        <name>Zn(2+)</name>
        <dbReference type="ChEBI" id="CHEBI:29105"/>
        <label>2</label>
    </ligand>
</feature>
<feature type="binding site" evidence="1">
    <location>
        <position position="175"/>
    </location>
    <ligand>
        <name>Zn(2+)</name>
        <dbReference type="ChEBI" id="CHEBI:29105"/>
        <label>1</label>
        <note>catalytic</note>
    </ligand>
</feature>
<feature type="binding site" evidence="1">
    <location>
        <begin position="200"/>
        <end position="205"/>
    </location>
    <ligand>
        <name>NAD(+)</name>
        <dbReference type="ChEBI" id="CHEBI:57540"/>
    </ligand>
</feature>
<feature type="binding site" evidence="1">
    <location>
        <position position="224"/>
    </location>
    <ligand>
        <name>NAD(+)</name>
        <dbReference type="ChEBI" id="CHEBI:57540"/>
    </ligand>
</feature>
<feature type="binding site" evidence="1">
    <location>
        <position position="229"/>
    </location>
    <ligand>
        <name>NAD(+)</name>
        <dbReference type="ChEBI" id="CHEBI:57540"/>
    </ligand>
</feature>
<feature type="binding site" evidence="1">
    <location>
        <begin position="293"/>
        <end position="295"/>
    </location>
    <ligand>
        <name>NAD(+)</name>
        <dbReference type="ChEBI" id="CHEBI:57540"/>
    </ligand>
</feature>
<feature type="binding site" evidence="1">
    <location>
        <position position="370"/>
    </location>
    <ligand>
        <name>NAD(+)</name>
        <dbReference type="ChEBI" id="CHEBI:57540"/>
    </ligand>
</feature>
<feature type="modified residue" description="N-acetylalanine" evidence="1">
    <location>
        <position position="1"/>
    </location>
</feature>
<organism>
    <name type="scientific">Columba livia</name>
    <name type="common">Rock dove</name>
    <dbReference type="NCBI Taxonomy" id="8932"/>
    <lineage>
        <taxon>Eukaryota</taxon>
        <taxon>Metazoa</taxon>
        <taxon>Chordata</taxon>
        <taxon>Craniata</taxon>
        <taxon>Vertebrata</taxon>
        <taxon>Euteleostomi</taxon>
        <taxon>Archelosauria</taxon>
        <taxon>Archosauria</taxon>
        <taxon>Dinosauria</taxon>
        <taxon>Saurischia</taxon>
        <taxon>Theropoda</taxon>
        <taxon>Coelurosauria</taxon>
        <taxon>Aves</taxon>
        <taxon>Neognathae</taxon>
        <taxon>Neoaves</taxon>
        <taxon>Columbimorphae</taxon>
        <taxon>Columbiformes</taxon>
        <taxon>Columbidae</taxon>
        <taxon>Columba</taxon>
    </lineage>
</organism>
<keyword id="KW-0007">Acetylation</keyword>
<keyword id="KW-0963">Cytoplasm</keyword>
<keyword id="KW-0903">Direct protein sequencing</keyword>
<keyword id="KW-0479">Metal-binding</keyword>
<keyword id="KW-0520">NAD</keyword>
<keyword id="KW-0560">Oxidoreductase</keyword>
<keyword id="KW-0862">Zinc</keyword>
<proteinExistence type="evidence at protein level"/>
<reference evidence="4" key="1">
    <citation type="submission" date="2010-12" db="UniProtKB">
        <authorList>
            <person name="Cederlund E."/>
            <person name="Hedlund J."/>
            <person name="Hjelmqvist L."/>
            <person name="Jonsson A."/>
            <person name="Shafqat J."/>
        </authorList>
    </citation>
    <scope>PROTEIN SEQUENCE</scope>
    <source>
        <tissue>Liver</tissue>
    </source>
</reference>
<protein>
    <recommendedName>
        <fullName evidence="2">Alcohol dehydrogenase 1</fullName>
        <ecNumber>1.1.1.1</ecNumber>
    </recommendedName>
    <alternativeName>
        <fullName evidence="2">Alcohol dehydrogenase I</fullName>
    </alternativeName>
</protein>
<gene>
    <name evidence="2" type="primary">ADH1</name>
</gene>
<dbReference type="EC" id="1.1.1.1"/>
<dbReference type="SMR" id="P86883"/>
<dbReference type="eggNOG" id="KOG0022">
    <property type="taxonomic scope" value="Eukaryota"/>
</dbReference>
<dbReference type="BRENDA" id="1.1.1.1">
    <property type="organism ID" value="1579"/>
</dbReference>
<dbReference type="GO" id="GO:0005829">
    <property type="term" value="C:cytosol"/>
    <property type="evidence" value="ECO:0007669"/>
    <property type="project" value="TreeGrafter"/>
</dbReference>
<dbReference type="GO" id="GO:0004745">
    <property type="term" value="F:all-trans-retinol dehydrogenase (NAD+) activity"/>
    <property type="evidence" value="ECO:0007669"/>
    <property type="project" value="TreeGrafter"/>
</dbReference>
<dbReference type="GO" id="GO:0008270">
    <property type="term" value="F:zinc ion binding"/>
    <property type="evidence" value="ECO:0007669"/>
    <property type="project" value="InterPro"/>
</dbReference>
<dbReference type="GO" id="GO:0042573">
    <property type="term" value="P:retinoic acid metabolic process"/>
    <property type="evidence" value="ECO:0007669"/>
    <property type="project" value="TreeGrafter"/>
</dbReference>
<dbReference type="GO" id="GO:0042572">
    <property type="term" value="P:retinol metabolic process"/>
    <property type="evidence" value="ECO:0007669"/>
    <property type="project" value="TreeGrafter"/>
</dbReference>
<dbReference type="CDD" id="cd08299">
    <property type="entry name" value="alcohol_DH_class_I_II_IV"/>
    <property type="match status" value="1"/>
</dbReference>
<dbReference type="FunFam" id="3.40.50.720:FF:000003">
    <property type="entry name" value="S-(hydroxymethyl)glutathione dehydrogenase"/>
    <property type="match status" value="1"/>
</dbReference>
<dbReference type="FunFam" id="3.90.180.10:FF:000001">
    <property type="entry name" value="S-(hydroxymethyl)glutathione dehydrogenase"/>
    <property type="match status" value="1"/>
</dbReference>
<dbReference type="Gene3D" id="3.90.180.10">
    <property type="entry name" value="Medium-chain alcohol dehydrogenases, catalytic domain"/>
    <property type="match status" value="1"/>
</dbReference>
<dbReference type="Gene3D" id="3.40.50.720">
    <property type="entry name" value="NAD(P)-binding Rossmann-like Domain"/>
    <property type="match status" value="1"/>
</dbReference>
<dbReference type="InterPro" id="IPR013149">
    <property type="entry name" value="ADH-like_C"/>
</dbReference>
<dbReference type="InterPro" id="IPR013154">
    <property type="entry name" value="ADH-like_N"/>
</dbReference>
<dbReference type="InterPro" id="IPR002328">
    <property type="entry name" value="ADH_Zn_CS"/>
</dbReference>
<dbReference type="InterPro" id="IPR011032">
    <property type="entry name" value="GroES-like_sf"/>
</dbReference>
<dbReference type="InterPro" id="IPR036291">
    <property type="entry name" value="NAD(P)-bd_dom_sf"/>
</dbReference>
<dbReference type="PANTHER" id="PTHR43880">
    <property type="entry name" value="ALCOHOL DEHYDROGENASE"/>
    <property type="match status" value="1"/>
</dbReference>
<dbReference type="PANTHER" id="PTHR43880:SF8">
    <property type="entry name" value="ALCOHOL DEHYDROGENASE 6 (CLASS V)"/>
    <property type="match status" value="1"/>
</dbReference>
<dbReference type="Pfam" id="PF08240">
    <property type="entry name" value="ADH_N"/>
    <property type="match status" value="1"/>
</dbReference>
<dbReference type="Pfam" id="PF00107">
    <property type="entry name" value="ADH_zinc_N"/>
    <property type="match status" value="1"/>
</dbReference>
<dbReference type="SUPFAM" id="SSF50129">
    <property type="entry name" value="GroES-like"/>
    <property type="match status" value="1"/>
</dbReference>
<dbReference type="SUPFAM" id="SSF51735">
    <property type="entry name" value="NAD(P)-binding Rossmann-fold domains"/>
    <property type="match status" value="1"/>
</dbReference>
<dbReference type="PROSITE" id="PS00059">
    <property type="entry name" value="ADH_ZINC"/>
    <property type="match status" value="1"/>
</dbReference>
<comment type="catalytic activity">
    <reaction evidence="2">
        <text>a primary alcohol + NAD(+) = an aldehyde + NADH + H(+)</text>
        <dbReference type="Rhea" id="RHEA:10736"/>
        <dbReference type="ChEBI" id="CHEBI:15378"/>
        <dbReference type="ChEBI" id="CHEBI:15734"/>
        <dbReference type="ChEBI" id="CHEBI:17478"/>
        <dbReference type="ChEBI" id="CHEBI:57540"/>
        <dbReference type="ChEBI" id="CHEBI:57945"/>
        <dbReference type="EC" id="1.1.1.1"/>
    </reaction>
</comment>
<comment type="catalytic activity">
    <reaction evidence="2">
        <text>a secondary alcohol + NAD(+) = a ketone + NADH + H(+)</text>
        <dbReference type="Rhea" id="RHEA:10740"/>
        <dbReference type="ChEBI" id="CHEBI:15378"/>
        <dbReference type="ChEBI" id="CHEBI:17087"/>
        <dbReference type="ChEBI" id="CHEBI:35681"/>
        <dbReference type="ChEBI" id="CHEBI:57540"/>
        <dbReference type="ChEBI" id="CHEBI:57945"/>
        <dbReference type="EC" id="1.1.1.1"/>
    </reaction>
</comment>
<comment type="cofactor">
    <cofactor evidence="1">
        <name>Zn(2+)</name>
        <dbReference type="ChEBI" id="CHEBI:29105"/>
    </cofactor>
    <text evidence="1">Binds 2 Zn(2+) ions per subunit.</text>
</comment>
<comment type="subunit">
    <text evidence="1">Homodimer.</text>
</comment>
<comment type="subcellular location">
    <subcellularLocation>
        <location evidence="2">Cytoplasm</location>
    </subcellularLocation>
</comment>
<comment type="similarity">
    <text evidence="3">Belongs to the zinc-containing alcohol dehydrogenase family. Class-I subfamily.</text>
</comment>
<name>ADH1_COLLI</name>